<sequence>MGHQQLYWSHPRKFGQGSRSCRVCSNRHGLIRKYGLNMCRQCFRQYAKDIGFVKLD</sequence>
<gene>
    <name type="primary">rps29</name>
</gene>
<proteinExistence type="inferred from homology"/>
<comment type="function">
    <text evidence="1">Component of the small ribosomal subunit. The ribosome is a large ribonucleoprotein complex responsible for the synthesis of proteins in the cell.</text>
</comment>
<comment type="cofactor">
    <cofactor evidence="1">
        <name>Zn(2+)</name>
        <dbReference type="ChEBI" id="CHEBI:29105"/>
    </cofactor>
    <text evidence="1">Binds 1 zinc ion per subunit.</text>
</comment>
<comment type="subunit">
    <text evidence="2">Component of the 40S small ribosomal subunit.</text>
</comment>
<comment type="subcellular location">
    <subcellularLocation>
        <location evidence="1">Cytoplasm</location>
        <location evidence="1">Cytosol</location>
    </subcellularLocation>
    <subcellularLocation>
        <location evidence="1">Cytoplasm</location>
    </subcellularLocation>
    <subcellularLocation>
        <location evidence="2">Rough endoplasmic reticulum</location>
    </subcellularLocation>
    <text evidence="1 2">Detected on cytosolic polysomes (By similarity). Detected in ribosomes that are associated with the rough endoplasmic reticulum (By similarity).</text>
</comment>
<comment type="similarity">
    <text evidence="3">Belongs to the universal ribosomal protein uS14 family.</text>
</comment>
<accession>Q6UZG0</accession>
<protein>
    <recommendedName>
        <fullName evidence="3">Small ribosomal subunit protein uS14</fullName>
    </recommendedName>
    <alternativeName>
        <fullName>40S ribosomal protein S29</fullName>
    </alternativeName>
</protein>
<reference key="1">
    <citation type="journal article" date="2005" name="FEBS J.">
        <title>The male seahorse synthesizes and secretes a novel C-type lectin into the brood pouch during early pregnancy.</title>
        <authorList>
            <person name="Melamed P."/>
            <person name="Xue Y."/>
            <person name="Poon J.F."/>
            <person name="Wu Q."/>
            <person name="Xie H."/>
            <person name="Yeo J."/>
            <person name="Foo T.W."/>
            <person name="Chua H.K."/>
        </authorList>
    </citation>
    <scope>NUCLEOTIDE SEQUENCE [MRNA]</scope>
</reference>
<feature type="chain" id="PRO_0000131023" description="Small ribosomal subunit protein uS14">
    <location>
        <begin position="1"/>
        <end position="56"/>
    </location>
</feature>
<feature type="binding site" evidence="1">
    <location>
        <position position="21"/>
    </location>
    <ligand>
        <name>Zn(2+)</name>
        <dbReference type="ChEBI" id="CHEBI:29105"/>
    </ligand>
</feature>
<feature type="binding site" evidence="1">
    <location>
        <position position="24"/>
    </location>
    <ligand>
        <name>Zn(2+)</name>
        <dbReference type="ChEBI" id="CHEBI:29105"/>
    </ligand>
</feature>
<feature type="binding site" evidence="1">
    <location>
        <position position="39"/>
    </location>
    <ligand>
        <name>Zn(2+)</name>
        <dbReference type="ChEBI" id="CHEBI:29105"/>
    </ligand>
</feature>
<feature type="binding site" evidence="1">
    <location>
        <position position="42"/>
    </location>
    <ligand>
        <name>Zn(2+)</name>
        <dbReference type="ChEBI" id="CHEBI:29105"/>
    </ligand>
</feature>
<dbReference type="EMBL" id="AY357068">
    <property type="protein sequence ID" value="AAQ63317.1"/>
    <property type="molecule type" value="mRNA"/>
</dbReference>
<dbReference type="RefSeq" id="XP_019750493.1">
    <property type="nucleotide sequence ID" value="XM_019894934.1"/>
</dbReference>
<dbReference type="SMR" id="Q6UZG0"/>
<dbReference type="STRING" id="109280.ENSHCOP00000011666"/>
<dbReference type="Ensembl" id="ENSHCOT00000018455.1">
    <property type="protein sequence ID" value="ENSHCOP00000011666.1"/>
    <property type="gene ID" value="ENSHCOG00000014532.1"/>
</dbReference>
<dbReference type="GeneID" id="109530963"/>
<dbReference type="KEGG" id="hcq:109530963"/>
<dbReference type="CTD" id="6235"/>
<dbReference type="GeneTree" id="ENSGT00940000161931"/>
<dbReference type="OMA" id="HCFREIA"/>
<dbReference type="OrthoDB" id="10252683at2759"/>
<dbReference type="Proteomes" id="UP000264820">
    <property type="component" value="Unplaced"/>
</dbReference>
<dbReference type="GO" id="GO:0098556">
    <property type="term" value="C:cytoplasmic side of rough endoplasmic reticulum membrane"/>
    <property type="evidence" value="ECO:0000250"/>
    <property type="project" value="UniProtKB"/>
</dbReference>
<dbReference type="GO" id="GO:0022627">
    <property type="term" value="C:cytosolic small ribosomal subunit"/>
    <property type="evidence" value="ECO:0000250"/>
    <property type="project" value="UniProtKB"/>
</dbReference>
<dbReference type="GO" id="GO:0005840">
    <property type="term" value="C:ribosome"/>
    <property type="evidence" value="ECO:0000250"/>
    <property type="project" value="UniProtKB"/>
</dbReference>
<dbReference type="GO" id="GO:0003735">
    <property type="term" value="F:structural constituent of ribosome"/>
    <property type="evidence" value="ECO:0007669"/>
    <property type="project" value="InterPro"/>
</dbReference>
<dbReference type="GO" id="GO:0008270">
    <property type="term" value="F:zinc ion binding"/>
    <property type="evidence" value="ECO:0000250"/>
    <property type="project" value="UniProtKB"/>
</dbReference>
<dbReference type="GO" id="GO:0002181">
    <property type="term" value="P:cytoplasmic translation"/>
    <property type="evidence" value="ECO:0000250"/>
    <property type="project" value="UniProtKB"/>
</dbReference>
<dbReference type="FunFam" id="4.10.830.10:FF:000002">
    <property type="entry name" value="40S ribosomal protein S29"/>
    <property type="match status" value="1"/>
</dbReference>
<dbReference type="Gene3D" id="4.10.830.10">
    <property type="entry name" value="30s Ribosomal Protein S14, Chain N"/>
    <property type="match status" value="1"/>
</dbReference>
<dbReference type="InterPro" id="IPR001209">
    <property type="entry name" value="Ribosomal_uS14"/>
</dbReference>
<dbReference type="InterPro" id="IPR018271">
    <property type="entry name" value="Ribosomal_uS14_CS"/>
</dbReference>
<dbReference type="InterPro" id="IPR039744">
    <property type="entry name" value="RIbosomal_uS14_euk_arc"/>
</dbReference>
<dbReference type="InterPro" id="IPR043140">
    <property type="entry name" value="Ribosomal_uS14_sf"/>
</dbReference>
<dbReference type="NCBIfam" id="NF004424">
    <property type="entry name" value="PRK05766.1"/>
    <property type="match status" value="1"/>
</dbReference>
<dbReference type="PANTHER" id="PTHR12010">
    <property type="entry name" value="40S RIBOSOMAL PROTEIN S29"/>
    <property type="match status" value="1"/>
</dbReference>
<dbReference type="PANTHER" id="PTHR12010:SF2">
    <property type="entry name" value="40S RIBOSOMAL PROTEIN S29"/>
    <property type="match status" value="1"/>
</dbReference>
<dbReference type="Pfam" id="PF00253">
    <property type="entry name" value="Ribosomal_S14"/>
    <property type="match status" value="1"/>
</dbReference>
<dbReference type="PROSITE" id="PS00527">
    <property type="entry name" value="RIBOSOMAL_S14"/>
    <property type="match status" value="1"/>
</dbReference>
<organism>
    <name type="scientific">Hippocampus comes</name>
    <name type="common">Tiger tail seahorse</name>
    <dbReference type="NCBI Taxonomy" id="109280"/>
    <lineage>
        <taxon>Eukaryota</taxon>
        <taxon>Metazoa</taxon>
        <taxon>Chordata</taxon>
        <taxon>Craniata</taxon>
        <taxon>Vertebrata</taxon>
        <taxon>Euteleostomi</taxon>
        <taxon>Actinopterygii</taxon>
        <taxon>Neopterygii</taxon>
        <taxon>Teleostei</taxon>
        <taxon>Neoteleostei</taxon>
        <taxon>Acanthomorphata</taxon>
        <taxon>Syngnathiaria</taxon>
        <taxon>Syngnathiformes</taxon>
        <taxon>Syngnathoidei</taxon>
        <taxon>Syngnathidae</taxon>
        <taxon>Hippocampus</taxon>
    </lineage>
</organism>
<keyword id="KW-0963">Cytoplasm</keyword>
<keyword id="KW-0256">Endoplasmic reticulum</keyword>
<keyword id="KW-0479">Metal-binding</keyword>
<keyword id="KW-0687">Ribonucleoprotein</keyword>
<keyword id="KW-0689">Ribosomal protein</keyword>
<keyword id="KW-0862">Zinc</keyword>
<name>RS29_HIPCM</name>
<evidence type="ECO:0000250" key="1">
    <source>
        <dbReference type="UniProtKB" id="P62273"/>
    </source>
</evidence>
<evidence type="ECO:0000250" key="2">
    <source>
        <dbReference type="UniProtKB" id="Q6QAP6"/>
    </source>
</evidence>
<evidence type="ECO:0000305" key="3"/>